<dbReference type="EC" id="1.2.1.38" evidence="1"/>
<dbReference type="EMBL" id="CP000559">
    <property type="protein sequence ID" value="ABN07800.1"/>
    <property type="molecule type" value="Genomic_DNA"/>
</dbReference>
<dbReference type="RefSeq" id="WP_011834003.1">
    <property type="nucleotide sequence ID" value="NC_008942.1"/>
</dbReference>
<dbReference type="SMR" id="A2STZ4"/>
<dbReference type="STRING" id="410358.Mlab_1639"/>
<dbReference type="GeneID" id="4795329"/>
<dbReference type="KEGG" id="mla:Mlab_1639"/>
<dbReference type="eggNOG" id="arCOG00495">
    <property type="taxonomic scope" value="Archaea"/>
</dbReference>
<dbReference type="HOGENOM" id="CLU_006384_0_1_2"/>
<dbReference type="OrthoDB" id="372053at2157"/>
<dbReference type="UniPathway" id="UPA00068">
    <property type="reaction ID" value="UER00108"/>
</dbReference>
<dbReference type="Proteomes" id="UP000000365">
    <property type="component" value="Chromosome"/>
</dbReference>
<dbReference type="GO" id="GO:0005737">
    <property type="term" value="C:cytoplasm"/>
    <property type="evidence" value="ECO:0007669"/>
    <property type="project" value="UniProtKB-SubCell"/>
</dbReference>
<dbReference type="GO" id="GO:0003942">
    <property type="term" value="F:N-acetyl-gamma-glutamyl-phosphate reductase activity"/>
    <property type="evidence" value="ECO:0007669"/>
    <property type="project" value="UniProtKB-UniRule"/>
</dbReference>
<dbReference type="GO" id="GO:0051287">
    <property type="term" value="F:NAD binding"/>
    <property type="evidence" value="ECO:0007669"/>
    <property type="project" value="InterPro"/>
</dbReference>
<dbReference type="GO" id="GO:0070401">
    <property type="term" value="F:NADP+ binding"/>
    <property type="evidence" value="ECO:0007669"/>
    <property type="project" value="InterPro"/>
</dbReference>
<dbReference type="GO" id="GO:0006526">
    <property type="term" value="P:L-arginine biosynthetic process"/>
    <property type="evidence" value="ECO:0007669"/>
    <property type="project" value="UniProtKB-UniRule"/>
</dbReference>
<dbReference type="CDD" id="cd23934">
    <property type="entry name" value="AGPR_1_C"/>
    <property type="match status" value="1"/>
</dbReference>
<dbReference type="CDD" id="cd17895">
    <property type="entry name" value="AGPR_1_N"/>
    <property type="match status" value="1"/>
</dbReference>
<dbReference type="Gene3D" id="3.30.360.10">
    <property type="entry name" value="Dihydrodipicolinate Reductase, domain 2"/>
    <property type="match status" value="1"/>
</dbReference>
<dbReference type="Gene3D" id="3.40.50.720">
    <property type="entry name" value="NAD(P)-binding Rossmann-like Domain"/>
    <property type="match status" value="1"/>
</dbReference>
<dbReference type="HAMAP" id="MF_00150">
    <property type="entry name" value="ArgC_type1"/>
    <property type="match status" value="1"/>
</dbReference>
<dbReference type="InterPro" id="IPR023013">
    <property type="entry name" value="AGPR_AS"/>
</dbReference>
<dbReference type="InterPro" id="IPR000706">
    <property type="entry name" value="AGPR_type-1"/>
</dbReference>
<dbReference type="InterPro" id="IPR036291">
    <property type="entry name" value="NAD(P)-bd_dom_sf"/>
</dbReference>
<dbReference type="InterPro" id="IPR050085">
    <property type="entry name" value="NAGSA_dehydrogenase"/>
</dbReference>
<dbReference type="InterPro" id="IPR000534">
    <property type="entry name" value="Semialdehyde_DH_NAD-bd"/>
</dbReference>
<dbReference type="NCBIfam" id="TIGR01850">
    <property type="entry name" value="argC"/>
    <property type="match status" value="1"/>
</dbReference>
<dbReference type="PANTHER" id="PTHR32338:SF10">
    <property type="entry name" value="N-ACETYL-GAMMA-GLUTAMYL-PHOSPHATE REDUCTASE, CHLOROPLASTIC-RELATED"/>
    <property type="match status" value="1"/>
</dbReference>
<dbReference type="PANTHER" id="PTHR32338">
    <property type="entry name" value="N-ACETYL-GAMMA-GLUTAMYL-PHOSPHATE REDUCTASE, CHLOROPLASTIC-RELATED-RELATED"/>
    <property type="match status" value="1"/>
</dbReference>
<dbReference type="Pfam" id="PF01118">
    <property type="entry name" value="Semialdhyde_dh"/>
    <property type="match status" value="1"/>
</dbReference>
<dbReference type="Pfam" id="PF22698">
    <property type="entry name" value="Semialdhyde_dhC_1"/>
    <property type="match status" value="1"/>
</dbReference>
<dbReference type="SMART" id="SM00859">
    <property type="entry name" value="Semialdhyde_dh"/>
    <property type="match status" value="1"/>
</dbReference>
<dbReference type="SUPFAM" id="SSF55347">
    <property type="entry name" value="Glyceraldehyde-3-phosphate dehydrogenase-like, C-terminal domain"/>
    <property type="match status" value="1"/>
</dbReference>
<dbReference type="SUPFAM" id="SSF51735">
    <property type="entry name" value="NAD(P)-binding Rossmann-fold domains"/>
    <property type="match status" value="1"/>
</dbReference>
<dbReference type="PROSITE" id="PS01224">
    <property type="entry name" value="ARGC"/>
    <property type="match status" value="1"/>
</dbReference>
<feature type="chain" id="PRO_1000011011" description="N-acetyl-gamma-glutamyl-phosphate reductase">
    <location>
        <begin position="1"/>
        <end position="330"/>
    </location>
</feature>
<feature type="active site" evidence="1">
    <location>
        <position position="143"/>
    </location>
</feature>
<reference key="1">
    <citation type="journal article" date="2009" name="Stand. Genomic Sci.">
        <title>Complete genome sequence of Methanocorpusculum labreanum type strain Z.</title>
        <authorList>
            <person name="Anderson I.J."/>
            <person name="Sieprawska-Lupa M."/>
            <person name="Goltsman E."/>
            <person name="Lapidus A."/>
            <person name="Copeland A."/>
            <person name="Glavina Del Rio T."/>
            <person name="Tice H."/>
            <person name="Dalin E."/>
            <person name="Barry K."/>
            <person name="Pitluck S."/>
            <person name="Hauser L."/>
            <person name="Land M."/>
            <person name="Lucas S."/>
            <person name="Richardson P."/>
            <person name="Whitman W.B."/>
            <person name="Kyrpides N.C."/>
        </authorList>
    </citation>
    <scope>NUCLEOTIDE SEQUENCE [LARGE SCALE GENOMIC DNA]</scope>
    <source>
        <strain>ATCC 43576 / DSM 4855 / Z</strain>
    </source>
</reference>
<protein>
    <recommendedName>
        <fullName evidence="1">N-acetyl-gamma-glutamyl-phosphate reductase</fullName>
        <shortName evidence="1">AGPR</shortName>
        <ecNumber evidence="1">1.2.1.38</ecNumber>
    </recommendedName>
    <alternativeName>
        <fullName evidence="1">N-acetyl-glutamate semialdehyde dehydrogenase</fullName>
        <shortName evidence="1">NAGSA dehydrogenase</shortName>
    </alternativeName>
</protein>
<organism>
    <name type="scientific">Methanocorpusculum labreanum (strain ATCC 43576 / DSM 4855 / Z)</name>
    <dbReference type="NCBI Taxonomy" id="410358"/>
    <lineage>
        <taxon>Archaea</taxon>
        <taxon>Methanobacteriati</taxon>
        <taxon>Methanobacteriota</taxon>
        <taxon>Stenosarchaea group</taxon>
        <taxon>Methanomicrobia</taxon>
        <taxon>Methanomicrobiales</taxon>
        <taxon>Methanocorpusculaceae</taxon>
        <taxon>Methanocorpusculum</taxon>
    </lineage>
</organism>
<proteinExistence type="inferred from homology"/>
<comment type="function">
    <text evidence="1">Catalyzes the NADPH-dependent reduction of N-acetyl-5-glutamyl phosphate to yield N-acetyl-L-glutamate 5-semialdehyde.</text>
</comment>
<comment type="catalytic activity">
    <reaction evidence="1">
        <text>N-acetyl-L-glutamate 5-semialdehyde + phosphate + NADP(+) = N-acetyl-L-glutamyl 5-phosphate + NADPH + H(+)</text>
        <dbReference type="Rhea" id="RHEA:21588"/>
        <dbReference type="ChEBI" id="CHEBI:15378"/>
        <dbReference type="ChEBI" id="CHEBI:29123"/>
        <dbReference type="ChEBI" id="CHEBI:43474"/>
        <dbReference type="ChEBI" id="CHEBI:57783"/>
        <dbReference type="ChEBI" id="CHEBI:57936"/>
        <dbReference type="ChEBI" id="CHEBI:58349"/>
        <dbReference type="EC" id="1.2.1.38"/>
    </reaction>
</comment>
<comment type="pathway">
    <text evidence="1">Amino-acid biosynthesis; L-arginine biosynthesis; N(2)-acetyl-L-ornithine from L-glutamate: step 3/4.</text>
</comment>
<comment type="subcellular location">
    <subcellularLocation>
        <location evidence="1">Cytoplasm</location>
    </subcellularLocation>
</comment>
<comment type="similarity">
    <text evidence="1">Belongs to the NAGSA dehydrogenase family. Type 1 subfamily.</text>
</comment>
<evidence type="ECO:0000255" key="1">
    <source>
        <dbReference type="HAMAP-Rule" id="MF_00150"/>
    </source>
</evidence>
<accession>A2STZ4</accession>
<gene>
    <name evidence="1" type="primary">argC</name>
    <name type="ordered locus">Mlab_1639</name>
</gene>
<name>ARGC_METLZ</name>
<keyword id="KW-0028">Amino-acid biosynthesis</keyword>
<keyword id="KW-0055">Arginine biosynthesis</keyword>
<keyword id="KW-0963">Cytoplasm</keyword>
<keyword id="KW-0521">NADP</keyword>
<keyword id="KW-0560">Oxidoreductase</keyword>
<keyword id="KW-1185">Reference proteome</keyword>
<sequence length="330" mass="36211">MDIAIIGASGYAGGDLIRLLLTHKEADIVCATSRKLAGTPVTKDHIHLKNLIDLEYTNPDVENIDADFAFLAVPHTAAMQYAGKLKERGIKTVDFSADYRLPREIYEKTYGVKHSDYFKAPYGIPELHRNEVKNASFVANPGCFPTGATLAAAPVAKLAHTIIYDSKSGVSGAGDSISETTHFPNVAENILPYKITAHRHLPEMRQEAAFLGSKANVYFTPHLLPAIRGIITTAHILFNEPMELEMIQKLYQDFYKNEPFVRLQPAKLGGVRGSNFCDINFELENDGTRLVAVSAIDNLVKGAAGQAVQNMNIMCGFDEAEGIRMPGMFP</sequence>